<feature type="chain" id="PRO_1000139277" description="Cyclic pyranopterin monophosphate synthase">
    <location>
        <begin position="1"/>
        <end position="162"/>
    </location>
</feature>
<feature type="active site" evidence="1">
    <location>
        <position position="128"/>
    </location>
</feature>
<feature type="binding site" evidence="1">
    <location>
        <begin position="75"/>
        <end position="77"/>
    </location>
    <ligand>
        <name>substrate</name>
    </ligand>
</feature>
<feature type="binding site" evidence="1">
    <location>
        <begin position="113"/>
        <end position="114"/>
    </location>
    <ligand>
        <name>substrate</name>
    </ligand>
</feature>
<proteinExistence type="inferred from homology"/>
<name>MOAC_KLEP3</name>
<dbReference type="EC" id="4.6.1.17" evidence="1"/>
<dbReference type="EMBL" id="CP000964">
    <property type="protein sequence ID" value="ACI09075.1"/>
    <property type="molecule type" value="Genomic_DNA"/>
</dbReference>
<dbReference type="SMR" id="B5XYW4"/>
<dbReference type="KEGG" id="kpe:KPK_3760"/>
<dbReference type="HOGENOM" id="CLU_074693_1_1_6"/>
<dbReference type="UniPathway" id="UPA00344"/>
<dbReference type="Proteomes" id="UP000001734">
    <property type="component" value="Chromosome"/>
</dbReference>
<dbReference type="GO" id="GO:0061799">
    <property type="term" value="F:cyclic pyranopterin monophosphate synthase activity"/>
    <property type="evidence" value="ECO:0007669"/>
    <property type="project" value="UniProtKB-UniRule"/>
</dbReference>
<dbReference type="GO" id="GO:0006777">
    <property type="term" value="P:Mo-molybdopterin cofactor biosynthetic process"/>
    <property type="evidence" value="ECO:0007669"/>
    <property type="project" value="UniProtKB-UniRule"/>
</dbReference>
<dbReference type="CDD" id="cd01420">
    <property type="entry name" value="MoaC_PE"/>
    <property type="match status" value="1"/>
</dbReference>
<dbReference type="FunFam" id="3.30.70.640:FF:000001">
    <property type="entry name" value="Cyclic pyranopterin monophosphate synthase"/>
    <property type="match status" value="1"/>
</dbReference>
<dbReference type="Gene3D" id="3.30.70.640">
    <property type="entry name" value="Molybdopterin cofactor biosynthesis C (MoaC) domain"/>
    <property type="match status" value="1"/>
</dbReference>
<dbReference type="HAMAP" id="MF_01224_B">
    <property type="entry name" value="MoaC_B"/>
    <property type="match status" value="1"/>
</dbReference>
<dbReference type="InterPro" id="IPR023045">
    <property type="entry name" value="MoaC"/>
</dbReference>
<dbReference type="InterPro" id="IPR047594">
    <property type="entry name" value="MoaC_bact/euk"/>
</dbReference>
<dbReference type="InterPro" id="IPR036522">
    <property type="entry name" value="MoaC_sf"/>
</dbReference>
<dbReference type="InterPro" id="IPR050105">
    <property type="entry name" value="MoCo_biosynth_MoaA/MoaC"/>
</dbReference>
<dbReference type="InterPro" id="IPR002820">
    <property type="entry name" value="Mopterin_CF_biosynth-C_dom"/>
</dbReference>
<dbReference type="NCBIfam" id="TIGR00581">
    <property type="entry name" value="moaC"/>
    <property type="match status" value="1"/>
</dbReference>
<dbReference type="NCBIfam" id="NF006870">
    <property type="entry name" value="PRK09364.1"/>
    <property type="match status" value="1"/>
</dbReference>
<dbReference type="PANTHER" id="PTHR22960">
    <property type="entry name" value="MOLYBDOPTERIN COFACTOR SYNTHESIS PROTEIN A"/>
    <property type="match status" value="1"/>
</dbReference>
<dbReference type="Pfam" id="PF01967">
    <property type="entry name" value="MoaC"/>
    <property type="match status" value="1"/>
</dbReference>
<dbReference type="SUPFAM" id="SSF55040">
    <property type="entry name" value="Molybdenum cofactor biosynthesis protein C, MoaC"/>
    <property type="match status" value="1"/>
</dbReference>
<protein>
    <recommendedName>
        <fullName evidence="1">Cyclic pyranopterin monophosphate synthase</fullName>
        <ecNumber evidence="1">4.6.1.17</ecNumber>
    </recommendedName>
    <alternativeName>
        <fullName evidence="1">Molybdenum cofactor biosynthesis protein C</fullName>
    </alternativeName>
</protein>
<reference key="1">
    <citation type="journal article" date="2008" name="PLoS Genet.">
        <title>Complete genome sequence of the N2-fixing broad host range endophyte Klebsiella pneumoniae 342 and virulence predictions verified in mice.</title>
        <authorList>
            <person name="Fouts D.E."/>
            <person name="Tyler H.L."/>
            <person name="DeBoy R.T."/>
            <person name="Daugherty S."/>
            <person name="Ren Q."/>
            <person name="Badger J.H."/>
            <person name="Durkin A.S."/>
            <person name="Huot H."/>
            <person name="Shrivastava S."/>
            <person name="Kothari S."/>
            <person name="Dodson R.J."/>
            <person name="Mohamoud Y."/>
            <person name="Khouri H."/>
            <person name="Roesch L.F.W."/>
            <person name="Krogfelt K.A."/>
            <person name="Struve C."/>
            <person name="Triplett E.W."/>
            <person name="Methe B.A."/>
        </authorList>
    </citation>
    <scope>NUCLEOTIDE SEQUENCE [LARGE SCALE GENOMIC DNA]</scope>
    <source>
        <strain>342</strain>
    </source>
</reference>
<keyword id="KW-0456">Lyase</keyword>
<keyword id="KW-0501">Molybdenum cofactor biosynthesis</keyword>
<sequence length="162" mass="17561">MSQLTHINAAGEAHMVDVSGKAETVREARAEAYVEMQAATLAMIIDGSHHKGDVFATARIAGIQAAKRTWELIPLCHPLMLSKVEVNLQAQPEHNRVRIESLCRLTGKTGVEMEALTAASVAALTIYDMCKAVQKDMVIGPLRLLAKSGGKSGDFKVDERHD</sequence>
<gene>
    <name evidence="1" type="primary">moaC</name>
    <name type="ordered locus">KPK_3760</name>
</gene>
<organism>
    <name type="scientific">Klebsiella pneumoniae (strain 342)</name>
    <dbReference type="NCBI Taxonomy" id="507522"/>
    <lineage>
        <taxon>Bacteria</taxon>
        <taxon>Pseudomonadati</taxon>
        <taxon>Pseudomonadota</taxon>
        <taxon>Gammaproteobacteria</taxon>
        <taxon>Enterobacterales</taxon>
        <taxon>Enterobacteriaceae</taxon>
        <taxon>Klebsiella/Raoultella group</taxon>
        <taxon>Klebsiella</taxon>
        <taxon>Klebsiella pneumoniae complex</taxon>
    </lineage>
</organism>
<comment type="function">
    <text evidence="1">Catalyzes the conversion of (8S)-3',8-cyclo-7,8-dihydroguanosine 5'-triphosphate to cyclic pyranopterin monophosphate (cPMP).</text>
</comment>
<comment type="catalytic activity">
    <reaction evidence="1">
        <text>(8S)-3',8-cyclo-7,8-dihydroguanosine 5'-triphosphate = cyclic pyranopterin phosphate + diphosphate</text>
        <dbReference type="Rhea" id="RHEA:49580"/>
        <dbReference type="ChEBI" id="CHEBI:33019"/>
        <dbReference type="ChEBI" id="CHEBI:59648"/>
        <dbReference type="ChEBI" id="CHEBI:131766"/>
        <dbReference type="EC" id="4.6.1.17"/>
    </reaction>
</comment>
<comment type="pathway">
    <text evidence="1">Cofactor biosynthesis; molybdopterin biosynthesis.</text>
</comment>
<comment type="subunit">
    <text evidence="1">Homohexamer; trimer of dimers.</text>
</comment>
<comment type="similarity">
    <text evidence="1">Belongs to the MoaC family.</text>
</comment>
<accession>B5XYW4</accession>
<evidence type="ECO:0000255" key="1">
    <source>
        <dbReference type="HAMAP-Rule" id="MF_01224"/>
    </source>
</evidence>